<name>ACKA_EMENI</name>
<evidence type="ECO:0000255" key="1">
    <source>
        <dbReference type="HAMAP-Rule" id="MF_03131"/>
    </source>
</evidence>
<organism>
    <name type="scientific">Emericella nidulans (strain FGSC A4 / ATCC 38163 / CBS 112.46 / NRRL 194 / M139)</name>
    <name type="common">Aspergillus nidulans</name>
    <dbReference type="NCBI Taxonomy" id="227321"/>
    <lineage>
        <taxon>Eukaryota</taxon>
        <taxon>Fungi</taxon>
        <taxon>Dikarya</taxon>
        <taxon>Ascomycota</taxon>
        <taxon>Pezizomycotina</taxon>
        <taxon>Eurotiomycetes</taxon>
        <taxon>Eurotiomycetidae</taxon>
        <taxon>Eurotiales</taxon>
        <taxon>Aspergillaceae</taxon>
        <taxon>Aspergillus</taxon>
        <taxon>Aspergillus subgen. Nidulantes</taxon>
    </lineage>
</organism>
<keyword id="KW-0067">ATP-binding</keyword>
<keyword id="KW-0418">Kinase</keyword>
<keyword id="KW-0460">Magnesium</keyword>
<keyword id="KW-0479">Metal-binding</keyword>
<keyword id="KW-0547">Nucleotide-binding</keyword>
<keyword id="KW-1185">Reference proteome</keyword>
<keyword id="KW-0808">Transferase</keyword>
<proteinExistence type="inferred from homology"/>
<reference key="1">
    <citation type="journal article" date="2005" name="Nature">
        <title>Sequencing of Aspergillus nidulans and comparative analysis with A. fumigatus and A. oryzae.</title>
        <authorList>
            <person name="Galagan J.E."/>
            <person name="Calvo S.E."/>
            <person name="Cuomo C."/>
            <person name="Ma L.-J."/>
            <person name="Wortman J.R."/>
            <person name="Batzoglou S."/>
            <person name="Lee S.-I."/>
            <person name="Bastuerkmen M."/>
            <person name="Spevak C.C."/>
            <person name="Clutterbuck J."/>
            <person name="Kapitonov V."/>
            <person name="Jurka J."/>
            <person name="Scazzocchio C."/>
            <person name="Farman M.L."/>
            <person name="Butler J."/>
            <person name="Purcell S."/>
            <person name="Harris S."/>
            <person name="Braus G.H."/>
            <person name="Draht O."/>
            <person name="Busch S."/>
            <person name="D'Enfert C."/>
            <person name="Bouchier C."/>
            <person name="Goldman G.H."/>
            <person name="Bell-Pedersen D."/>
            <person name="Griffiths-Jones S."/>
            <person name="Doonan J.H."/>
            <person name="Yu J."/>
            <person name="Vienken K."/>
            <person name="Pain A."/>
            <person name="Freitag M."/>
            <person name="Selker E.U."/>
            <person name="Archer D.B."/>
            <person name="Penalva M.A."/>
            <person name="Oakley B.R."/>
            <person name="Momany M."/>
            <person name="Tanaka T."/>
            <person name="Kumagai T."/>
            <person name="Asai K."/>
            <person name="Machida M."/>
            <person name="Nierman W.C."/>
            <person name="Denning D.W."/>
            <person name="Caddick M.X."/>
            <person name="Hynes M."/>
            <person name="Paoletti M."/>
            <person name="Fischer R."/>
            <person name="Miller B.L."/>
            <person name="Dyer P.S."/>
            <person name="Sachs M.S."/>
            <person name="Osmani S.A."/>
            <person name="Birren B.W."/>
        </authorList>
    </citation>
    <scope>NUCLEOTIDE SEQUENCE [LARGE SCALE GENOMIC DNA]</scope>
    <source>
        <strain>FGSC A4 / ATCC 38163 / CBS 112.46 / NRRL 194 / M139</strain>
    </source>
</reference>
<reference key="2">
    <citation type="journal article" date="2009" name="Fungal Genet. Biol.">
        <title>The 2008 update of the Aspergillus nidulans genome annotation: a community effort.</title>
        <authorList>
            <person name="Wortman J.R."/>
            <person name="Gilsenan J.M."/>
            <person name="Joardar V."/>
            <person name="Deegan J."/>
            <person name="Clutterbuck J."/>
            <person name="Andersen M.R."/>
            <person name="Archer D."/>
            <person name="Bencina M."/>
            <person name="Braus G."/>
            <person name="Coutinho P."/>
            <person name="von Dohren H."/>
            <person name="Doonan J."/>
            <person name="Driessen A.J."/>
            <person name="Durek P."/>
            <person name="Espeso E."/>
            <person name="Fekete E."/>
            <person name="Flipphi M."/>
            <person name="Estrada C.G."/>
            <person name="Geysens S."/>
            <person name="Goldman G."/>
            <person name="de Groot P.W."/>
            <person name="Hansen K."/>
            <person name="Harris S.D."/>
            <person name="Heinekamp T."/>
            <person name="Helmstaedt K."/>
            <person name="Henrissat B."/>
            <person name="Hofmann G."/>
            <person name="Homan T."/>
            <person name="Horio T."/>
            <person name="Horiuchi H."/>
            <person name="James S."/>
            <person name="Jones M."/>
            <person name="Karaffa L."/>
            <person name="Karanyi Z."/>
            <person name="Kato M."/>
            <person name="Keller N."/>
            <person name="Kelly D.E."/>
            <person name="Kiel J.A."/>
            <person name="Kim J.M."/>
            <person name="van der Klei I.J."/>
            <person name="Klis F.M."/>
            <person name="Kovalchuk A."/>
            <person name="Krasevec N."/>
            <person name="Kubicek C.P."/>
            <person name="Liu B."/>
            <person name="Maccabe A."/>
            <person name="Meyer V."/>
            <person name="Mirabito P."/>
            <person name="Miskei M."/>
            <person name="Mos M."/>
            <person name="Mullins J."/>
            <person name="Nelson D.R."/>
            <person name="Nielsen J."/>
            <person name="Oakley B.R."/>
            <person name="Osmani S.A."/>
            <person name="Pakula T."/>
            <person name="Paszewski A."/>
            <person name="Paulsen I."/>
            <person name="Pilsyk S."/>
            <person name="Pocsi I."/>
            <person name="Punt P.J."/>
            <person name="Ram A.F."/>
            <person name="Ren Q."/>
            <person name="Robellet X."/>
            <person name="Robson G."/>
            <person name="Seiboth B."/>
            <person name="van Solingen P."/>
            <person name="Specht T."/>
            <person name="Sun J."/>
            <person name="Taheri-Talesh N."/>
            <person name="Takeshita N."/>
            <person name="Ussery D."/>
            <person name="vanKuyk P.A."/>
            <person name="Visser H."/>
            <person name="van de Vondervoort P.J."/>
            <person name="de Vries R.P."/>
            <person name="Walton J."/>
            <person name="Xiang X."/>
            <person name="Xiong Y."/>
            <person name="Zeng A.P."/>
            <person name="Brandt B.W."/>
            <person name="Cornell M.J."/>
            <person name="van den Hondel C.A."/>
            <person name="Visser J."/>
            <person name="Oliver S.G."/>
            <person name="Turner G."/>
        </authorList>
    </citation>
    <scope>GENOME REANNOTATION</scope>
    <source>
        <strain>FGSC A4 / ATCC 38163 / CBS 112.46 / NRRL 194 / M139</strain>
    </source>
</reference>
<protein>
    <recommendedName>
        <fullName evidence="1">Probable acetate kinase</fullName>
        <ecNumber evidence="1">2.7.2.1</ecNumber>
    </recommendedName>
    <alternativeName>
        <fullName evidence="1">Acetokinase</fullName>
    </alternativeName>
</protein>
<accession>Q5B3G6</accession>
<accession>C8V9F4</accession>
<comment type="catalytic activity">
    <reaction evidence="1">
        <text>acetate + ATP = acetyl phosphate + ADP</text>
        <dbReference type="Rhea" id="RHEA:11352"/>
        <dbReference type="ChEBI" id="CHEBI:22191"/>
        <dbReference type="ChEBI" id="CHEBI:30089"/>
        <dbReference type="ChEBI" id="CHEBI:30616"/>
        <dbReference type="ChEBI" id="CHEBI:456216"/>
        <dbReference type="EC" id="2.7.2.1"/>
    </reaction>
</comment>
<comment type="cofactor">
    <cofactor evidence="1">
        <name>Mg(2+)</name>
        <dbReference type="ChEBI" id="CHEBI:18420"/>
    </cofactor>
</comment>
<comment type="pathway">
    <text evidence="1">Metabolic intermediate biosynthesis; acetyl-CoA biosynthesis; acetyl-CoA from acetate: step 1/2.</text>
</comment>
<comment type="similarity">
    <text evidence="1">Belongs to the acetokinase family.</text>
</comment>
<dbReference type="EC" id="2.7.2.1" evidence="1"/>
<dbReference type="EMBL" id="AACD01000084">
    <property type="protein sequence ID" value="EAA60992.1"/>
    <property type="molecule type" value="Genomic_DNA"/>
</dbReference>
<dbReference type="EMBL" id="BN001303">
    <property type="protein sequence ID" value="CBF76490.1"/>
    <property type="molecule type" value="Genomic_DNA"/>
</dbReference>
<dbReference type="RefSeq" id="XP_662518.1">
    <property type="nucleotide sequence ID" value="XM_657426.1"/>
</dbReference>
<dbReference type="SMR" id="Q5B3G6"/>
<dbReference type="STRING" id="227321.Q5B3G6"/>
<dbReference type="EnsemblFungi" id="CBF76490">
    <property type="protein sequence ID" value="CBF76490"/>
    <property type="gene ID" value="ANIA_04914"/>
</dbReference>
<dbReference type="KEGG" id="ani:ANIA_04914"/>
<dbReference type="VEuPathDB" id="FungiDB:AN4914"/>
<dbReference type="HOGENOM" id="CLU_020352_1_0_1"/>
<dbReference type="InParanoid" id="Q5B3G6"/>
<dbReference type="OMA" id="HKYVSQR"/>
<dbReference type="OrthoDB" id="67445at2759"/>
<dbReference type="UniPathway" id="UPA00340">
    <property type="reaction ID" value="UER00458"/>
</dbReference>
<dbReference type="Proteomes" id="UP000000560">
    <property type="component" value="Chromosome III"/>
</dbReference>
<dbReference type="GO" id="GO:0008776">
    <property type="term" value="F:acetate kinase activity"/>
    <property type="evidence" value="ECO:0000318"/>
    <property type="project" value="GO_Central"/>
</dbReference>
<dbReference type="GO" id="GO:0005524">
    <property type="term" value="F:ATP binding"/>
    <property type="evidence" value="ECO:0007669"/>
    <property type="project" value="UniProtKB-KW"/>
</dbReference>
<dbReference type="GO" id="GO:0000287">
    <property type="term" value="F:magnesium ion binding"/>
    <property type="evidence" value="ECO:0007669"/>
    <property type="project" value="UniProtKB-UniRule"/>
</dbReference>
<dbReference type="GO" id="GO:0006083">
    <property type="term" value="P:acetate metabolic process"/>
    <property type="evidence" value="ECO:0000318"/>
    <property type="project" value="GO_Central"/>
</dbReference>
<dbReference type="GO" id="GO:0006085">
    <property type="term" value="P:acetyl-CoA biosynthetic process"/>
    <property type="evidence" value="ECO:0007669"/>
    <property type="project" value="UniProtKB-UniRule"/>
</dbReference>
<dbReference type="Gene3D" id="3.30.420.40">
    <property type="match status" value="2"/>
</dbReference>
<dbReference type="HAMAP" id="MF_00020">
    <property type="entry name" value="Acetate_kinase"/>
    <property type="match status" value="1"/>
</dbReference>
<dbReference type="InterPro" id="IPR004372">
    <property type="entry name" value="Ac/propionate_kinase"/>
</dbReference>
<dbReference type="InterPro" id="IPR000890">
    <property type="entry name" value="Aliphatic_acid_kin_short-chain"/>
</dbReference>
<dbReference type="InterPro" id="IPR023865">
    <property type="entry name" value="Aliphatic_acid_kinase_CS"/>
</dbReference>
<dbReference type="InterPro" id="IPR043129">
    <property type="entry name" value="ATPase_NBD"/>
</dbReference>
<dbReference type="NCBIfam" id="TIGR00016">
    <property type="entry name" value="ackA"/>
    <property type="match status" value="1"/>
</dbReference>
<dbReference type="PANTHER" id="PTHR21060">
    <property type="entry name" value="ACETATE KINASE"/>
    <property type="match status" value="1"/>
</dbReference>
<dbReference type="PANTHER" id="PTHR21060:SF15">
    <property type="entry name" value="ACETATE KINASE-RELATED"/>
    <property type="match status" value="1"/>
</dbReference>
<dbReference type="Pfam" id="PF00871">
    <property type="entry name" value="Acetate_kinase"/>
    <property type="match status" value="1"/>
</dbReference>
<dbReference type="PIRSF" id="PIRSF000722">
    <property type="entry name" value="Acetate_prop_kin"/>
    <property type="match status" value="1"/>
</dbReference>
<dbReference type="PRINTS" id="PR00471">
    <property type="entry name" value="ACETATEKNASE"/>
</dbReference>
<dbReference type="SUPFAM" id="SSF53067">
    <property type="entry name" value="Actin-like ATPase domain"/>
    <property type="match status" value="2"/>
</dbReference>
<dbReference type="PROSITE" id="PS01075">
    <property type="entry name" value="ACETATE_KINASE_1"/>
    <property type="match status" value="1"/>
</dbReference>
<dbReference type="PROSITE" id="PS01076">
    <property type="entry name" value="ACETATE_KINASE_2"/>
    <property type="match status" value="1"/>
</dbReference>
<gene>
    <name type="ORF">AN4914</name>
</gene>
<sequence length="420" mass="46066">MPRKSILSVNAGSSSVKITFYSYTKTPSVIATAQVSGITAPPATFKYSVGSKQKKEELKEKISSGPDAFKLLLHRCFTDSDLKDVASADDLAYICHRVVHGGDFESPVVINEETYHQLEDLEDLAPLHNFAALEIVRLCKKELPNVQSITFFDSSFHKSLPPYVKTYPIDQETARRNKLRKYGFHGISYSFILRSVAEYLNKPVEKTSLIALHIGSGASVCAIKDGKSIDTSMGLTPLAGLPGATRSGDIDPSLVFHYTNEAGKLSPASTKEMHISTAEEILNKKSGWKVLTGTTDFSQIAVEDPPSEQHKLAFDILVDRIVGYIGNYYVKLDGQVEGIVFAGGIGEKSALLRKAVIEQTRCLGFAVDPEKNQHGPGDDETVVDITASGRSDVKRVFICQTDEQFEMAYNCTKTQGLDKQ</sequence>
<feature type="chain" id="PRO_0000402091" description="Probable acetate kinase">
    <location>
        <begin position="1"/>
        <end position="420"/>
    </location>
</feature>
<feature type="active site" description="Proton donor/acceptor" evidence="1">
    <location>
        <position position="153"/>
    </location>
</feature>
<feature type="binding site" evidence="1">
    <location>
        <position position="10"/>
    </location>
    <ligand>
        <name>Mg(2+)</name>
        <dbReference type="ChEBI" id="CHEBI:18420"/>
    </ligand>
</feature>
<feature type="binding site" evidence="1">
    <location>
        <position position="17"/>
    </location>
    <ligand>
        <name>ATP</name>
        <dbReference type="ChEBI" id="CHEBI:30616"/>
    </ligand>
</feature>
<feature type="binding site" evidence="1">
    <location>
        <position position="97"/>
    </location>
    <ligand>
        <name>substrate</name>
    </ligand>
</feature>
<feature type="binding site" evidence="1">
    <location>
        <begin position="213"/>
        <end position="217"/>
    </location>
    <ligand>
        <name>ATP</name>
        <dbReference type="ChEBI" id="CHEBI:30616"/>
    </ligand>
</feature>
<feature type="binding site" evidence="1">
    <location>
        <position position="403"/>
    </location>
    <ligand>
        <name>Mg(2+)</name>
        <dbReference type="ChEBI" id="CHEBI:18420"/>
    </ligand>
</feature>
<feature type="site" description="Transition state stabilizer" evidence="1">
    <location>
        <position position="185"/>
    </location>
</feature>
<feature type="site" description="Transition state stabilizer" evidence="1">
    <location>
        <position position="246"/>
    </location>
</feature>